<geneLocation type="mitochondrion"/>
<comment type="function">
    <text evidence="1">Core subunit of the mitochondrial membrane respiratory chain NADH dehydrogenase (Complex I) which catalyzes electron transfer from NADH through the respiratory chain, using ubiquinone as an electron acceptor. Essential for the catalytic activity and assembly of complex I.</text>
</comment>
<comment type="catalytic activity">
    <reaction evidence="1">
        <text>a ubiquinone + NADH + 5 H(+)(in) = a ubiquinol + NAD(+) + 4 H(+)(out)</text>
        <dbReference type="Rhea" id="RHEA:29091"/>
        <dbReference type="Rhea" id="RHEA-COMP:9565"/>
        <dbReference type="Rhea" id="RHEA-COMP:9566"/>
        <dbReference type="ChEBI" id="CHEBI:15378"/>
        <dbReference type="ChEBI" id="CHEBI:16389"/>
        <dbReference type="ChEBI" id="CHEBI:17976"/>
        <dbReference type="ChEBI" id="CHEBI:57540"/>
        <dbReference type="ChEBI" id="CHEBI:57945"/>
        <dbReference type="EC" id="7.1.1.2"/>
    </reaction>
</comment>
<comment type="subunit">
    <text evidence="2">Core subunit of respiratory chain NADH dehydrogenase (Complex I) which is composed of 45 different subunits.</text>
</comment>
<comment type="subcellular location">
    <subcellularLocation>
        <location evidence="2">Mitochondrion inner membrane</location>
        <topology evidence="3">Multi-pass membrane protein</topology>
    </subcellularLocation>
</comment>
<comment type="similarity">
    <text evidence="4">Belongs to the complex I subunit 4 family.</text>
</comment>
<dbReference type="EC" id="7.1.1.2" evidence="1"/>
<dbReference type="EMBL" id="U96639">
    <property type="protein sequence ID" value="AAD04772.1"/>
    <property type="molecule type" value="Genomic_DNA"/>
</dbReference>
<dbReference type="EMBL" id="AY729880">
    <property type="protein sequence ID" value="AAU12156.1"/>
    <property type="molecule type" value="Genomic_DNA"/>
</dbReference>
<dbReference type="PIR" id="T11502">
    <property type="entry name" value="T11502"/>
</dbReference>
<dbReference type="RefSeq" id="NP_008480.1">
    <property type="nucleotide sequence ID" value="NC_002008.4"/>
</dbReference>
<dbReference type="SMR" id="Q9ZZ58"/>
<dbReference type="FunCoup" id="Q9ZZ58">
    <property type="interactions" value="12"/>
</dbReference>
<dbReference type="STRING" id="9615.ENSCAFP00000030318"/>
<dbReference type="PaxDb" id="9612-ENSCAFP00000030318"/>
<dbReference type="GeneID" id="804483"/>
<dbReference type="KEGG" id="cfa:804483"/>
<dbReference type="CTD" id="4538"/>
<dbReference type="eggNOG" id="KOG4845">
    <property type="taxonomic scope" value="Eukaryota"/>
</dbReference>
<dbReference type="HOGENOM" id="CLU_007100_4_0_1"/>
<dbReference type="InParanoid" id="Q9ZZ58"/>
<dbReference type="OMA" id="ITRWGNQ"/>
<dbReference type="OrthoDB" id="118951at2759"/>
<dbReference type="TreeFam" id="TF343520"/>
<dbReference type="Proteomes" id="UP000002254">
    <property type="component" value="Mitochondrion"/>
</dbReference>
<dbReference type="Proteomes" id="UP000694429">
    <property type="component" value="Unplaced"/>
</dbReference>
<dbReference type="Proteomes" id="UP000694542">
    <property type="component" value="Unassembled WGS sequence"/>
</dbReference>
<dbReference type="Proteomes" id="UP000805418">
    <property type="component" value="Mitochondrion MT"/>
</dbReference>
<dbReference type="Bgee" id="ENSCAFG00000022735">
    <property type="expression patterns" value="Expressed in cardiac muscle of left ventricle and 44 other cell types or tissues"/>
</dbReference>
<dbReference type="GO" id="GO:0005743">
    <property type="term" value="C:mitochondrial inner membrane"/>
    <property type="evidence" value="ECO:0000250"/>
    <property type="project" value="UniProtKB"/>
</dbReference>
<dbReference type="GO" id="GO:0045271">
    <property type="term" value="C:respiratory chain complex I"/>
    <property type="evidence" value="ECO:0000318"/>
    <property type="project" value="GO_Central"/>
</dbReference>
<dbReference type="GO" id="GO:0008137">
    <property type="term" value="F:NADH dehydrogenase (ubiquinone) activity"/>
    <property type="evidence" value="ECO:0000250"/>
    <property type="project" value="UniProtKB"/>
</dbReference>
<dbReference type="GO" id="GO:0048039">
    <property type="term" value="F:ubiquinone binding"/>
    <property type="evidence" value="ECO:0000318"/>
    <property type="project" value="GO_Central"/>
</dbReference>
<dbReference type="GO" id="GO:0009060">
    <property type="term" value="P:aerobic respiration"/>
    <property type="evidence" value="ECO:0000318"/>
    <property type="project" value="GO_Central"/>
</dbReference>
<dbReference type="GO" id="GO:0015990">
    <property type="term" value="P:electron transport coupled proton transport"/>
    <property type="evidence" value="ECO:0000318"/>
    <property type="project" value="GO_Central"/>
</dbReference>
<dbReference type="GO" id="GO:0006120">
    <property type="term" value="P:mitochondrial electron transport, NADH to ubiquinone"/>
    <property type="evidence" value="ECO:0000250"/>
    <property type="project" value="UniProtKB"/>
</dbReference>
<dbReference type="GO" id="GO:0032981">
    <property type="term" value="P:mitochondrial respiratory chain complex I assembly"/>
    <property type="evidence" value="ECO:0000250"/>
    <property type="project" value="UniProtKB"/>
</dbReference>
<dbReference type="InterPro" id="IPR000260">
    <property type="entry name" value="NADH4_N"/>
</dbReference>
<dbReference type="InterPro" id="IPR010227">
    <property type="entry name" value="NADH_Q_OxRdtase_chainM/4"/>
</dbReference>
<dbReference type="InterPro" id="IPR003918">
    <property type="entry name" value="NADH_UbQ_OxRdtase"/>
</dbReference>
<dbReference type="InterPro" id="IPR001750">
    <property type="entry name" value="ND/Mrp_TM"/>
</dbReference>
<dbReference type="NCBIfam" id="TIGR01972">
    <property type="entry name" value="NDH_I_M"/>
    <property type="match status" value="1"/>
</dbReference>
<dbReference type="PANTHER" id="PTHR43507">
    <property type="entry name" value="NADH-UBIQUINONE OXIDOREDUCTASE CHAIN 4"/>
    <property type="match status" value="1"/>
</dbReference>
<dbReference type="PANTHER" id="PTHR43507:SF20">
    <property type="entry name" value="NADH-UBIQUINONE OXIDOREDUCTASE CHAIN 4"/>
    <property type="match status" value="1"/>
</dbReference>
<dbReference type="Pfam" id="PF01059">
    <property type="entry name" value="Oxidored_q5_N"/>
    <property type="match status" value="1"/>
</dbReference>
<dbReference type="Pfam" id="PF00361">
    <property type="entry name" value="Proton_antipo_M"/>
    <property type="match status" value="1"/>
</dbReference>
<dbReference type="PRINTS" id="PR01437">
    <property type="entry name" value="NUOXDRDTASE4"/>
</dbReference>
<accession>Q9ZZ58</accession>
<evidence type="ECO:0000250" key="1">
    <source>
        <dbReference type="UniProtKB" id="P03905"/>
    </source>
</evidence>
<evidence type="ECO:0000250" key="2">
    <source>
        <dbReference type="UniProtKB" id="P03910"/>
    </source>
</evidence>
<evidence type="ECO:0000255" key="3"/>
<evidence type="ECO:0000305" key="4"/>
<evidence type="ECO:0000312" key="5">
    <source>
        <dbReference type="Proteomes" id="UP000002254"/>
    </source>
</evidence>
<gene>
    <name type="primary">MT-ND4</name>
    <name type="synonym">MTND4</name>
    <name type="synonym">NADH4</name>
    <name type="synonym">ND4</name>
</gene>
<sequence length="459" mass="52095">MLKIIIPTIMLIPLTWMSKPNMIWINTTTYGLLISLISLFYLNQPNDNTLNSSLMFFSDSLSAPLLALTTWLLPLMLMASQHHLSKEPLTRKKLYISMLILLQLFLIMTFTASELIFFYILFEATLIPTLIIITRWGNQTERLNAGLYFLFYTLMGSLPLLVALLYIHNFMGSLNFLMIQYWIQPLPNSWSNIFLWLACMMAFMVKMPLYGLHLWLPKAHVEAPIAGSMVLAAVLLKLGGYGMMRITTLLNPLTNFMAYPFMMLSLWGMIMTSSICLRQTDLKSLIAYSSVSHMALVIVAVLIQTPWSYMGATALMIAHGLTSSMLFCLANSNYERIHSRTMILARGLQTLLPLMAAWWLLASLTNLALPPTINLIGELFVVMSSFSWSNITIILMGINIIITALYSLYMLITTQRGKYSHHIKNIKPSFTRENALMTLHLLPLLLLSLNPKIILGPIY</sequence>
<proteinExistence type="inferred from homology"/>
<protein>
    <recommendedName>
        <fullName>NADH-ubiquinone oxidoreductase chain 4</fullName>
        <ecNumber evidence="1">7.1.1.2</ecNumber>
    </recommendedName>
    <alternativeName>
        <fullName>NADH dehydrogenase subunit 4</fullName>
    </alternativeName>
</protein>
<keyword id="KW-0249">Electron transport</keyword>
<keyword id="KW-0472">Membrane</keyword>
<keyword id="KW-0496">Mitochondrion</keyword>
<keyword id="KW-0999">Mitochondrion inner membrane</keyword>
<keyword id="KW-0520">NAD</keyword>
<keyword id="KW-1185">Reference proteome</keyword>
<keyword id="KW-0679">Respiratory chain</keyword>
<keyword id="KW-1278">Translocase</keyword>
<keyword id="KW-0812">Transmembrane</keyword>
<keyword id="KW-1133">Transmembrane helix</keyword>
<keyword id="KW-0813">Transport</keyword>
<keyword id="KW-0830">Ubiquinone</keyword>
<reference key="1">
    <citation type="journal article" date="1998" name="Mol. Phylogenet. Evol.">
        <title>The complete nucleotide sequence of the domestic dog (Canis familiaris) mitochondrial genome.</title>
        <authorList>
            <person name="Kim K.S."/>
            <person name="Lee S.E."/>
            <person name="Jeong H.W."/>
            <person name="Ha J.H."/>
        </authorList>
    </citation>
    <scope>NUCLEOTIDE SEQUENCE [GENOMIC DNA]</scope>
    <source>
        <strain evidence="5">Boxer</strain>
    </source>
</reference>
<reference key="2">
    <citation type="submission" date="2004-08" db="EMBL/GenBank/DDBJ databases">
        <title>The complete mitochondrial DNA sequence of the Beagle dog (Canis familiaris).</title>
        <authorList>
            <person name="Zhu S."/>
            <person name="Xu Q."/>
            <person name="Chang H."/>
        </authorList>
    </citation>
    <scope>NUCLEOTIDE SEQUENCE [GENOMIC DNA]</scope>
    <source>
        <strain>Beagle</strain>
    </source>
</reference>
<organism>
    <name type="scientific">Canis lupus familiaris</name>
    <name type="common">Dog</name>
    <name type="synonym">Canis familiaris</name>
    <dbReference type="NCBI Taxonomy" id="9615"/>
    <lineage>
        <taxon>Eukaryota</taxon>
        <taxon>Metazoa</taxon>
        <taxon>Chordata</taxon>
        <taxon>Craniata</taxon>
        <taxon>Vertebrata</taxon>
        <taxon>Euteleostomi</taxon>
        <taxon>Mammalia</taxon>
        <taxon>Eutheria</taxon>
        <taxon>Laurasiatheria</taxon>
        <taxon>Carnivora</taxon>
        <taxon>Caniformia</taxon>
        <taxon>Canidae</taxon>
        <taxon>Canis</taxon>
    </lineage>
</organism>
<name>NU4M_CANLF</name>
<feature type="chain" id="PRO_0000117914" description="NADH-ubiquinone oxidoreductase chain 4">
    <location>
        <begin position="1"/>
        <end position="459"/>
    </location>
</feature>
<feature type="transmembrane region" description="Helical" evidence="3">
    <location>
        <begin position="22"/>
        <end position="42"/>
    </location>
</feature>
<feature type="transmembrane region" description="Helical" evidence="3">
    <location>
        <begin position="60"/>
        <end position="80"/>
    </location>
</feature>
<feature type="transmembrane region" description="Helical" evidence="3">
    <location>
        <begin position="93"/>
        <end position="113"/>
    </location>
</feature>
<feature type="transmembrane region" description="Helical" evidence="3">
    <location>
        <begin position="114"/>
        <end position="134"/>
    </location>
</feature>
<feature type="transmembrane region" description="Helical" evidence="3">
    <location>
        <begin position="147"/>
        <end position="167"/>
    </location>
</feature>
<feature type="transmembrane region" description="Helical" evidence="3">
    <location>
        <begin position="193"/>
        <end position="213"/>
    </location>
</feature>
<feature type="transmembrane region" description="Helical" evidence="3">
    <location>
        <begin position="224"/>
        <end position="244"/>
    </location>
</feature>
<feature type="transmembrane region" description="Helical" evidence="3">
    <location>
        <begin position="256"/>
        <end position="276"/>
    </location>
</feature>
<feature type="transmembrane region" description="Helical" evidence="3">
    <location>
        <begin position="284"/>
        <end position="303"/>
    </location>
</feature>
<feature type="transmembrane region" description="Helical" evidence="3">
    <location>
        <begin position="308"/>
        <end position="330"/>
    </location>
</feature>
<feature type="transmembrane region" description="Helical" evidence="3">
    <location>
        <begin position="351"/>
        <end position="371"/>
    </location>
</feature>
<feature type="transmembrane region" description="Helical" evidence="3">
    <location>
        <begin position="391"/>
        <end position="411"/>
    </location>
</feature>
<feature type="transmembrane region" description="Helical" evidence="3">
    <location>
        <begin position="435"/>
        <end position="455"/>
    </location>
</feature>